<organism>
    <name type="scientific">Chlorocebus aethiops</name>
    <name type="common">Green monkey</name>
    <name type="synonym">Cercopithecus aethiops</name>
    <dbReference type="NCBI Taxonomy" id="9534"/>
    <lineage>
        <taxon>Eukaryota</taxon>
        <taxon>Metazoa</taxon>
        <taxon>Chordata</taxon>
        <taxon>Craniata</taxon>
        <taxon>Vertebrata</taxon>
        <taxon>Euteleostomi</taxon>
        <taxon>Mammalia</taxon>
        <taxon>Eutheria</taxon>
        <taxon>Euarchontoglires</taxon>
        <taxon>Primates</taxon>
        <taxon>Haplorrhini</taxon>
        <taxon>Catarrhini</taxon>
        <taxon>Cercopithecidae</taxon>
        <taxon>Cercopithecinae</taxon>
        <taxon>Chlorocebus</taxon>
    </lineage>
</organism>
<protein>
    <recommendedName>
        <fullName>Protein Wnt-2</fullName>
    </recommendedName>
</protein>
<evidence type="ECO:0000250" key="1"/>
<evidence type="ECO:0000250" key="2">
    <source>
        <dbReference type="UniProtKB" id="P27467"/>
    </source>
</evidence>
<evidence type="ECO:0000250" key="3">
    <source>
        <dbReference type="UniProtKB" id="P28026"/>
    </source>
</evidence>
<evidence type="ECO:0000250" key="4">
    <source>
        <dbReference type="UniProtKB" id="P56704"/>
    </source>
</evidence>
<evidence type="ECO:0000255" key="5"/>
<evidence type="ECO:0000305" key="6"/>
<name>WNT2_CHLAE</name>
<keyword id="KW-0217">Developmental protein</keyword>
<keyword id="KW-1015">Disulfide bond</keyword>
<keyword id="KW-0272">Extracellular matrix</keyword>
<keyword id="KW-0325">Glycoprotein</keyword>
<keyword id="KW-0449">Lipoprotein</keyword>
<keyword id="KW-0964">Secreted</keyword>
<keyword id="KW-0732">Signal</keyword>
<keyword id="KW-0879">Wnt signaling pathway</keyword>
<feature type="signal peptide" evidence="5">
    <location>
        <begin position="1"/>
        <end position="25"/>
    </location>
</feature>
<feature type="chain" id="PRO_0000248065" description="Protein Wnt-2">
    <location>
        <begin position="26"/>
        <end position="360"/>
    </location>
</feature>
<feature type="lipid moiety-binding region" description="O-palmitoleoyl serine; by PORCN" evidence="4">
    <location>
        <position position="212"/>
    </location>
</feature>
<feature type="glycosylation site" description="N-linked (GlcNAc...) asparagine" evidence="5">
    <location>
        <position position="295"/>
    </location>
</feature>
<feature type="disulfide bond" evidence="3">
    <location>
        <begin position="76"/>
        <end position="87"/>
    </location>
</feature>
<feature type="disulfide bond" evidence="3">
    <location>
        <begin position="127"/>
        <end position="135"/>
    </location>
</feature>
<feature type="disulfide bond" evidence="3">
    <location>
        <begin position="137"/>
        <end position="157"/>
    </location>
</feature>
<feature type="disulfide bond" evidence="3">
    <location>
        <begin position="206"/>
        <end position="220"/>
    </location>
</feature>
<feature type="disulfide bond" evidence="3">
    <location>
        <begin position="208"/>
        <end position="215"/>
    </location>
</feature>
<feature type="disulfide bond" evidence="3">
    <location>
        <begin position="278"/>
        <end position="309"/>
    </location>
</feature>
<feature type="disulfide bond" evidence="3">
    <location>
        <begin position="294"/>
        <end position="304"/>
    </location>
</feature>
<feature type="disulfide bond" evidence="3">
    <location>
        <begin position="308"/>
        <end position="348"/>
    </location>
</feature>
<feature type="disulfide bond" evidence="3">
    <location>
        <begin position="324"/>
        <end position="339"/>
    </location>
</feature>
<feature type="disulfide bond" evidence="3">
    <location>
        <begin position="326"/>
        <end position="336"/>
    </location>
</feature>
<feature type="disulfide bond" evidence="3">
    <location>
        <begin position="331"/>
        <end position="332"/>
    </location>
</feature>
<gene>
    <name type="primary">WNT2</name>
</gene>
<comment type="function">
    <text evidence="1">Ligand for members of the frizzled family of seven transmembrane receptors. Probable developmental protein. May be a signaling molecule which affects the development of discrete regions of tissues. Is likely to signal over only few cell diameters (By similarity).</text>
</comment>
<comment type="subcellular location">
    <subcellularLocation>
        <location evidence="1">Secreted</location>
        <location evidence="1">Extracellular space</location>
        <location evidence="1">Extracellular matrix</location>
    </subcellularLocation>
</comment>
<comment type="PTM">
    <text evidence="2 4">Palmitoleoylation is required for efficient binding to frizzled receptors. Depalmitoleoylation leads to Wnt signaling pathway inhibition.</text>
</comment>
<comment type="similarity">
    <text evidence="6">Belongs to the Wnt family.</text>
</comment>
<dbReference type="EMBL" id="DP000029">
    <property type="protein sequence ID" value="ABC87489.1"/>
    <property type="molecule type" value="Genomic_DNA"/>
</dbReference>
<dbReference type="SMR" id="Q2IBB0"/>
<dbReference type="GlyCosmos" id="Q2IBB0">
    <property type="glycosylation" value="1 site, No reported glycans"/>
</dbReference>
<dbReference type="GO" id="GO:0005615">
    <property type="term" value="C:extracellular space"/>
    <property type="evidence" value="ECO:0007669"/>
    <property type="project" value="TreeGrafter"/>
</dbReference>
<dbReference type="GO" id="GO:0005125">
    <property type="term" value="F:cytokine activity"/>
    <property type="evidence" value="ECO:0007669"/>
    <property type="project" value="TreeGrafter"/>
</dbReference>
<dbReference type="GO" id="GO:0005109">
    <property type="term" value="F:frizzled binding"/>
    <property type="evidence" value="ECO:0007669"/>
    <property type="project" value="TreeGrafter"/>
</dbReference>
<dbReference type="GO" id="GO:0048513">
    <property type="term" value="P:animal organ development"/>
    <property type="evidence" value="ECO:0007669"/>
    <property type="project" value="UniProtKB-ARBA"/>
</dbReference>
<dbReference type="GO" id="GO:0060070">
    <property type="term" value="P:canonical Wnt signaling pathway"/>
    <property type="evidence" value="ECO:0007669"/>
    <property type="project" value="TreeGrafter"/>
</dbReference>
<dbReference type="GO" id="GO:0045165">
    <property type="term" value="P:cell fate commitment"/>
    <property type="evidence" value="ECO:0007669"/>
    <property type="project" value="TreeGrafter"/>
</dbReference>
<dbReference type="GO" id="GO:0030182">
    <property type="term" value="P:neuron differentiation"/>
    <property type="evidence" value="ECO:0007669"/>
    <property type="project" value="TreeGrafter"/>
</dbReference>
<dbReference type="CDD" id="cd19345">
    <property type="entry name" value="Wnt_Wnt2"/>
    <property type="match status" value="1"/>
</dbReference>
<dbReference type="FunFam" id="3.30.2460.20:FF:000001">
    <property type="entry name" value="Wnt homolog"/>
    <property type="match status" value="1"/>
</dbReference>
<dbReference type="Gene3D" id="3.30.2460.20">
    <property type="match status" value="1"/>
</dbReference>
<dbReference type="InterPro" id="IPR005817">
    <property type="entry name" value="Wnt"/>
</dbReference>
<dbReference type="InterPro" id="IPR009140">
    <property type="entry name" value="Wnt2"/>
</dbReference>
<dbReference type="InterPro" id="IPR043158">
    <property type="entry name" value="Wnt_C"/>
</dbReference>
<dbReference type="InterPro" id="IPR018161">
    <property type="entry name" value="Wnt_CS"/>
</dbReference>
<dbReference type="PANTHER" id="PTHR12027:SF86">
    <property type="entry name" value="PROTEIN WNT-2"/>
    <property type="match status" value="1"/>
</dbReference>
<dbReference type="PANTHER" id="PTHR12027">
    <property type="entry name" value="WNT RELATED"/>
    <property type="match status" value="1"/>
</dbReference>
<dbReference type="Pfam" id="PF00110">
    <property type="entry name" value="wnt"/>
    <property type="match status" value="1"/>
</dbReference>
<dbReference type="PRINTS" id="PR01842">
    <property type="entry name" value="WNT2PROTEIN"/>
</dbReference>
<dbReference type="PRINTS" id="PR01349">
    <property type="entry name" value="WNTPROTEIN"/>
</dbReference>
<dbReference type="SMART" id="SM00097">
    <property type="entry name" value="WNT1"/>
    <property type="match status" value="1"/>
</dbReference>
<dbReference type="PROSITE" id="PS00246">
    <property type="entry name" value="WNT1"/>
    <property type="match status" value="1"/>
</dbReference>
<sequence>MNAPLGGIWLWLPLLLTWLTPEVNSSWWYMRATGGSSRVMCDNVPGLVSSQRQLCHRHPDVMRAISQGVAEWTAECQHQFRQHRWNCNTLDRDHSLFGRVLLRSSRESAFVYAISSAGVVFAITRACSQGEVKSCSCDPKKMGSAKDSKGIFDWGGCSDNIDYGIKFARAFVDAKERKGKDARALMNLHNNRAGRKAVKRFLKQECKCHGVSGSCTLRTCWLAMADFRKTGDYLWRKYNGAIQVVMNQDGTGFTVANERFKKPTKNDLVYFENSPDYCIRDREAGSLGTAGRVCNLTSRGMDSCEVMCCGRGYDTSHVTRMTKCGCKFHWCCAVRCQDCLEALDVHTCKAPKNADWTTPT</sequence>
<reference key="1">
    <citation type="submission" date="2006-01" db="EMBL/GenBank/DDBJ databases">
        <title>NISC comparative sequencing initiative.</title>
        <authorList>
            <person name="Antonellis A."/>
            <person name="Ayele K."/>
            <person name="Benjamin B."/>
            <person name="Blakesley R.W."/>
            <person name="Boakye A."/>
            <person name="Bouffard G.G."/>
            <person name="Brinkley C."/>
            <person name="Brooks S."/>
            <person name="Chu G."/>
            <person name="Coleman H."/>
            <person name="Engle J."/>
            <person name="Gestole M."/>
            <person name="Greene A."/>
            <person name="Guan X."/>
            <person name="Gupta J."/>
            <person name="Haghighi P."/>
            <person name="Han J."/>
            <person name="Hansen N."/>
            <person name="Ho S.-L."/>
            <person name="Hu P."/>
            <person name="Hunter G."/>
            <person name="Hurle B."/>
            <person name="Idol J.R."/>
            <person name="Kwong P."/>
            <person name="Laric P."/>
            <person name="Larson S."/>
            <person name="Lee-Lin S.-Q."/>
            <person name="Legaspi R."/>
            <person name="Madden M."/>
            <person name="Maduro Q.L."/>
            <person name="Maduro V.B."/>
            <person name="Margulies E.H."/>
            <person name="Masiello C."/>
            <person name="Maskeri B."/>
            <person name="McDowell J."/>
            <person name="Mojidi H.A."/>
            <person name="Mullikin J.C."/>
            <person name="Oestreicher J.S."/>
            <person name="Park M."/>
            <person name="Portnoy M.E."/>
            <person name="Prasad A."/>
            <person name="Puri O."/>
            <person name="Reddix-Dugue N."/>
            <person name="Schandler K."/>
            <person name="Schueler M.G."/>
            <person name="Sison C."/>
            <person name="Stantripop S."/>
            <person name="Stephen E."/>
            <person name="Taye A."/>
            <person name="Thomas J.W."/>
            <person name="Thomas P.J."/>
            <person name="Tsipouri V."/>
            <person name="Ung L."/>
            <person name="Vogt J.L."/>
            <person name="Wetherby K.D."/>
            <person name="Young A."/>
            <person name="Green E.D."/>
        </authorList>
    </citation>
    <scope>NUCLEOTIDE SEQUENCE [LARGE SCALE GENOMIC DNA]</scope>
</reference>
<proteinExistence type="inferred from homology"/>
<accession>Q2IBB0</accession>